<geneLocation type="chloroplast"/>
<protein>
    <recommendedName>
        <fullName evidence="1">Small ribosomal subunit protein uS11c</fullName>
    </recommendedName>
    <alternativeName>
        <fullName evidence="2">30S ribosomal protein S11, chloroplastic</fullName>
    </alternativeName>
</protein>
<dbReference type="EMBL" id="EU677193">
    <property type="protein sequence ID" value="ACC97251.1"/>
    <property type="molecule type" value="Genomic_DNA"/>
</dbReference>
<dbReference type="RefSeq" id="YP_002000431.1">
    <property type="nucleotide sequence ID" value="NC_011031.1"/>
</dbReference>
<dbReference type="SMR" id="B3V4S7"/>
<dbReference type="GeneID" id="6440110"/>
<dbReference type="GO" id="GO:0009507">
    <property type="term" value="C:chloroplast"/>
    <property type="evidence" value="ECO:0007669"/>
    <property type="project" value="UniProtKB-SubCell"/>
</dbReference>
<dbReference type="GO" id="GO:1990904">
    <property type="term" value="C:ribonucleoprotein complex"/>
    <property type="evidence" value="ECO:0007669"/>
    <property type="project" value="UniProtKB-KW"/>
</dbReference>
<dbReference type="GO" id="GO:0005840">
    <property type="term" value="C:ribosome"/>
    <property type="evidence" value="ECO:0007669"/>
    <property type="project" value="UniProtKB-KW"/>
</dbReference>
<dbReference type="GO" id="GO:0019843">
    <property type="term" value="F:rRNA binding"/>
    <property type="evidence" value="ECO:0007669"/>
    <property type="project" value="UniProtKB-UniRule"/>
</dbReference>
<dbReference type="GO" id="GO:0003735">
    <property type="term" value="F:structural constituent of ribosome"/>
    <property type="evidence" value="ECO:0007669"/>
    <property type="project" value="InterPro"/>
</dbReference>
<dbReference type="GO" id="GO:0006412">
    <property type="term" value="P:translation"/>
    <property type="evidence" value="ECO:0007669"/>
    <property type="project" value="UniProtKB-UniRule"/>
</dbReference>
<dbReference type="Gene3D" id="3.30.420.80">
    <property type="entry name" value="Ribosomal protein S11"/>
    <property type="match status" value="1"/>
</dbReference>
<dbReference type="HAMAP" id="MF_01310">
    <property type="entry name" value="Ribosomal_uS11"/>
    <property type="match status" value="1"/>
</dbReference>
<dbReference type="InterPro" id="IPR001971">
    <property type="entry name" value="Ribosomal_uS11"/>
</dbReference>
<dbReference type="InterPro" id="IPR036967">
    <property type="entry name" value="Ribosomal_uS11_sf"/>
</dbReference>
<dbReference type="NCBIfam" id="NF003698">
    <property type="entry name" value="PRK05309.1"/>
    <property type="match status" value="1"/>
</dbReference>
<dbReference type="PANTHER" id="PTHR11759">
    <property type="entry name" value="40S RIBOSOMAL PROTEIN S14/30S RIBOSOMAL PROTEIN S11"/>
    <property type="match status" value="1"/>
</dbReference>
<dbReference type="Pfam" id="PF00411">
    <property type="entry name" value="Ribosomal_S11"/>
    <property type="match status" value="1"/>
</dbReference>
<dbReference type="PIRSF" id="PIRSF002131">
    <property type="entry name" value="Ribosomal_S11"/>
    <property type="match status" value="1"/>
</dbReference>
<dbReference type="SUPFAM" id="SSF53137">
    <property type="entry name" value="Translational machinery components"/>
    <property type="match status" value="1"/>
</dbReference>
<name>RR11_OEDCA</name>
<sequence>MSKQLRQSTKKTKRRLYRGVIHIQTSYNNTIITVTNIKGDVMCWSSAGSSGLKGKRKSTAYAAKLAAANAARKAIRDFSLREAKVLITGPGPARETAIHEIYKAGIKLTVIREKSTVPHNGCRPPKRRRI</sequence>
<comment type="subunit">
    <text evidence="1">Part of the 30S ribosomal subunit.</text>
</comment>
<comment type="subcellular location">
    <subcellularLocation>
        <location>Plastid</location>
        <location>Chloroplast</location>
    </subcellularLocation>
</comment>
<comment type="similarity">
    <text evidence="1">Belongs to the universal ribosomal protein uS11 family.</text>
</comment>
<reference key="1">
    <citation type="journal article" date="2008" name="BMC Genomics">
        <title>Chloroplast DNA sequence of the green alga Oedogonium cardiacum (Chlorophyceae): unique genome architecture, derived characters shared with the Chaetophorales and novel genes acquired through horizontal transfer.</title>
        <authorList>
            <person name="Brouard J.-S."/>
            <person name="Otis C."/>
            <person name="Lemieux C."/>
            <person name="Turmel M."/>
        </authorList>
    </citation>
    <scope>NUCLEOTIDE SEQUENCE [LARGE SCALE GENOMIC DNA]</scope>
    <source>
        <strain>SAG 575-1b / CCAP 575/1B / UTEX LB 40</strain>
    </source>
</reference>
<accession>B3V4S7</accession>
<organism>
    <name type="scientific">Oedogonium cardiacum</name>
    <name type="common">Filamentous green alga</name>
    <dbReference type="NCBI Taxonomy" id="55995"/>
    <lineage>
        <taxon>Eukaryota</taxon>
        <taxon>Viridiplantae</taxon>
        <taxon>Chlorophyta</taxon>
        <taxon>core chlorophytes</taxon>
        <taxon>Chlorophyceae</taxon>
        <taxon>OCC clade</taxon>
        <taxon>Oedogoniales</taxon>
        <taxon>Oedogoniaceae</taxon>
        <taxon>Oedogonium</taxon>
    </lineage>
</organism>
<gene>
    <name evidence="1" type="primary">rps11</name>
</gene>
<evidence type="ECO:0000255" key="1">
    <source>
        <dbReference type="HAMAP-Rule" id="MF_01310"/>
    </source>
</evidence>
<evidence type="ECO:0000305" key="2"/>
<feature type="chain" id="PRO_0000364217" description="Small ribosomal subunit protein uS11c">
    <location>
        <begin position="1"/>
        <end position="130"/>
    </location>
</feature>
<proteinExistence type="inferred from homology"/>
<keyword id="KW-0150">Chloroplast</keyword>
<keyword id="KW-0934">Plastid</keyword>
<keyword id="KW-0687">Ribonucleoprotein</keyword>
<keyword id="KW-0689">Ribosomal protein</keyword>
<keyword id="KW-0694">RNA-binding</keyword>
<keyword id="KW-0699">rRNA-binding</keyword>